<name>NRDR_STRMK</name>
<comment type="function">
    <text evidence="1">Negatively regulates transcription of bacterial ribonucleotide reductase nrd genes and operons by binding to NrdR-boxes.</text>
</comment>
<comment type="cofactor">
    <cofactor evidence="1">
        <name>Zn(2+)</name>
        <dbReference type="ChEBI" id="CHEBI:29105"/>
    </cofactor>
    <text evidence="1">Binds 1 zinc ion.</text>
</comment>
<comment type="similarity">
    <text evidence="1">Belongs to the NrdR family.</text>
</comment>
<evidence type="ECO:0000255" key="1">
    <source>
        <dbReference type="HAMAP-Rule" id="MF_00440"/>
    </source>
</evidence>
<accession>B2FNK6</accession>
<gene>
    <name evidence="1" type="primary">nrdR</name>
    <name type="ordered locus">Smlt0722</name>
</gene>
<dbReference type="EMBL" id="AM743169">
    <property type="protein sequence ID" value="CAQ44301.1"/>
    <property type="molecule type" value="Genomic_DNA"/>
</dbReference>
<dbReference type="RefSeq" id="WP_004143350.1">
    <property type="nucleotide sequence ID" value="NC_010943.1"/>
</dbReference>
<dbReference type="SMR" id="B2FNK6"/>
<dbReference type="EnsemblBacteria" id="CAQ44301">
    <property type="protein sequence ID" value="CAQ44301"/>
    <property type="gene ID" value="Smlt0722"/>
</dbReference>
<dbReference type="GeneID" id="93831761"/>
<dbReference type="KEGG" id="sml:Smlt0722"/>
<dbReference type="eggNOG" id="COG1327">
    <property type="taxonomic scope" value="Bacteria"/>
</dbReference>
<dbReference type="HOGENOM" id="CLU_108412_0_0_6"/>
<dbReference type="Proteomes" id="UP000008840">
    <property type="component" value="Chromosome"/>
</dbReference>
<dbReference type="GO" id="GO:0005524">
    <property type="term" value="F:ATP binding"/>
    <property type="evidence" value="ECO:0007669"/>
    <property type="project" value="UniProtKB-KW"/>
</dbReference>
<dbReference type="GO" id="GO:0003677">
    <property type="term" value="F:DNA binding"/>
    <property type="evidence" value="ECO:0007669"/>
    <property type="project" value="UniProtKB-KW"/>
</dbReference>
<dbReference type="GO" id="GO:0008270">
    <property type="term" value="F:zinc ion binding"/>
    <property type="evidence" value="ECO:0007669"/>
    <property type="project" value="UniProtKB-UniRule"/>
</dbReference>
<dbReference type="GO" id="GO:0045892">
    <property type="term" value="P:negative regulation of DNA-templated transcription"/>
    <property type="evidence" value="ECO:0007669"/>
    <property type="project" value="UniProtKB-UniRule"/>
</dbReference>
<dbReference type="HAMAP" id="MF_00440">
    <property type="entry name" value="NrdR"/>
    <property type="match status" value="1"/>
</dbReference>
<dbReference type="InterPro" id="IPR005144">
    <property type="entry name" value="ATP-cone_dom"/>
</dbReference>
<dbReference type="InterPro" id="IPR055173">
    <property type="entry name" value="NrdR-like_N"/>
</dbReference>
<dbReference type="InterPro" id="IPR003796">
    <property type="entry name" value="RNR_NrdR-like"/>
</dbReference>
<dbReference type="NCBIfam" id="TIGR00244">
    <property type="entry name" value="transcriptional regulator NrdR"/>
    <property type="match status" value="1"/>
</dbReference>
<dbReference type="PANTHER" id="PTHR30455">
    <property type="entry name" value="TRANSCRIPTIONAL REPRESSOR NRDR"/>
    <property type="match status" value="1"/>
</dbReference>
<dbReference type="PANTHER" id="PTHR30455:SF2">
    <property type="entry name" value="TRANSCRIPTIONAL REPRESSOR NRDR"/>
    <property type="match status" value="1"/>
</dbReference>
<dbReference type="Pfam" id="PF03477">
    <property type="entry name" value="ATP-cone"/>
    <property type="match status" value="1"/>
</dbReference>
<dbReference type="Pfam" id="PF22811">
    <property type="entry name" value="Zn_ribbon_NrdR"/>
    <property type="match status" value="1"/>
</dbReference>
<dbReference type="PROSITE" id="PS51161">
    <property type="entry name" value="ATP_CONE"/>
    <property type="match status" value="1"/>
</dbReference>
<feature type="chain" id="PRO_1000124554" description="Transcriptional repressor NrdR">
    <location>
        <begin position="1"/>
        <end position="173"/>
    </location>
</feature>
<feature type="domain" description="ATP-cone" evidence="1">
    <location>
        <begin position="49"/>
        <end position="139"/>
    </location>
</feature>
<feature type="zinc finger region" evidence="1">
    <location>
        <begin position="3"/>
        <end position="34"/>
    </location>
</feature>
<sequence>MHCPFCQHADTRVIDSRVSEDGATIRRRRECEACGERFSTMETVELKLPAIVKSDGTREAFDQRKVRAGFDRALQKRAVAEDKIEAAVRAVVHQLRISGEREVPSIKVGEFVMNELRKLDHVGYVRFASVYRSFEDVADFREEIEKLERDLPSSTEQLQLLGDVIALTKKKKG</sequence>
<protein>
    <recommendedName>
        <fullName evidence="1">Transcriptional repressor NrdR</fullName>
    </recommendedName>
</protein>
<proteinExistence type="inferred from homology"/>
<keyword id="KW-0067">ATP-binding</keyword>
<keyword id="KW-0238">DNA-binding</keyword>
<keyword id="KW-0479">Metal-binding</keyword>
<keyword id="KW-0547">Nucleotide-binding</keyword>
<keyword id="KW-1185">Reference proteome</keyword>
<keyword id="KW-0678">Repressor</keyword>
<keyword id="KW-0804">Transcription</keyword>
<keyword id="KW-0805">Transcription regulation</keyword>
<keyword id="KW-0862">Zinc</keyword>
<keyword id="KW-0863">Zinc-finger</keyword>
<organism>
    <name type="scientific">Stenotrophomonas maltophilia (strain K279a)</name>
    <dbReference type="NCBI Taxonomy" id="522373"/>
    <lineage>
        <taxon>Bacteria</taxon>
        <taxon>Pseudomonadati</taxon>
        <taxon>Pseudomonadota</taxon>
        <taxon>Gammaproteobacteria</taxon>
        <taxon>Lysobacterales</taxon>
        <taxon>Lysobacteraceae</taxon>
        <taxon>Stenotrophomonas</taxon>
        <taxon>Stenotrophomonas maltophilia group</taxon>
    </lineage>
</organism>
<reference key="1">
    <citation type="journal article" date="2008" name="Genome Biol.">
        <title>The complete genome, comparative and functional analysis of Stenotrophomonas maltophilia reveals an organism heavily shielded by drug resistance determinants.</title>
        <authorList>
            <person name="Crossman L.C."/>
            <person name="Gould V.C."/>
            <person name="Dow J.M."/>
            <person name="Vernikos G.S."/>
            <person name="Okazaki A."/>
            <person name="Sebaihia M."/>
            <person name="Saunders D."/>
            <person name="Arrowsmith C."/>
            <person name="Carver T."/>
            <person name="Peters N."/>
            <person name="Adlem E."/>
            <person name="Kerhornou A."/>
            <person name="Lord A."/>
            <person name="Murphy L."/>
            <person name="Seeger K."/>
            <person name="Squares R."/>
            <person name="Rutter S."/>
            <person name="Quail M.A."/>
            <person name="Rajandream M.A."/>
            <person name="Harris D."/>
            <person name="Churcher C."/>
            <person name="Bentley S.D."/>
            <person name="Parkhill J."/>
            <person name="Thomson N.R."/>
            <person name="Avison M.B."/>
        </authorList>
    </citation>
    <scope>NUCLEOTIDE SEQUENCE [LARGE SCALE GENOMIC DNA]</scope>
    <source>
        <strain>K279a</strain>
    </source>
</reference>